<accession>B7N3C1</accession>
<proteinExistence type="inferred from homology"/>
<organism>
    <name type="scientific">Escherichia coli O17:K52:H18 (strain UMN026 / ExPEC)</name>
    <dbReference type="NCBI Taxonomy" id="585056"/>
    <lineage>
        <taxon>Bacteria</taxon>
        <taxon>Pseudomonadati</taxon>
        <taxon>Pseudomonadota</taxon>
        <taxon>Gammaproteobacteria</taxon>
        <taxon>Enterobacterales</taxon>
        <taxon>Enterobacteriaceae</taxon>
        <taxon>Escherichia</taxon>
    </lineage>
</organism>
<comment type="function">
    <text evidence="1">Component of the SOS system and an inhibitor of cell division. Accumulation of SulA causes rapid cessation of cell division and the appearance of long, non-septate filaments. In the presence of GTP, binds a polymerization-competent form of FtsZ in a 1:1 ratio, thus inhibiting FtsZ polymerization and therefore preventing it from participating in the assembly of the Z ring. This mechanism prevents the premature segregation of damaged DNA to daughter cells during cell division.</text>
</comment>
<comment type="subunit">
    <text evidence="1">Interacts with FtsZ.</text>
</comment>
<comment type="induction">
    <text evidence="1">By DNA damage, as part of the SOS response.</text>
</comment>
<comment type="PTM">
    <text evidence="1">Is rapidly cleaved and degraded by the Lon protease once DNA damage is repaired.</text>
</comment>
<comment type="similarity">
    <text evidence="1">Belongs to the SulA family.</text>
</comment>
<protein>
    <recommendedName>
        <fullName evidence="1">Cell division inhibitor SulA</fullName>
    </recommendedName>
</protein>
<keyword id="KW-0131">Cell cycle</keyword>
<keyword id="KW-0132">Cell division</keyword>
<keyword id="KW-0227">DNA damage</keyword>
<keyword id="KW-0717">Septation</keyword>
<keyword id="KW-0742">SOS response</keyword>
<feature type="chain" id="PRO_1000138160" description="Cell division inhibitor SulA">
    <location>
        <begin position="1"/>
        <end position="169"/>
    </location>
</feature>
<feature type="region of interest" description="FtsZ binding" evidence="1">
    <location>
        <begin position="106"/>
        <end position="112"/>
    </location>
</feature>
<feature type="region of interest" description="Lon protease binding" evidence="1">
    <location>
        <begin position="162"/>
        <end position="169"/>
    </location>
</feature>
<feature type="site" description="Essential for degradation by Lon protease" evidence="1">
    <location>
        <position position="169"/>
    </location>
</feature>
<sequence>MYTSGYAHRSSSFSSAASKIARVSTENTTAGLISEVVYREDQPMMTQLLLLPLLQQLGQQSRWQLWLTPQQKLSREWVQASGLPLTKVMQISQLSPCHTVESMVRALRTGNYSVVIGWLADDLTEEEHAELVDAANEGNAMGFIMRPVSASSHATRQLSGLKIHSNLYH</sequence>
<dbReference type="EMBL" id="CU928163">
    <property type="protein sequence ID" value="CAR12357.1"/>
    <property type="molecule type" value="Genomic_DNA"/>
</dbReference>
<dbReference type="RefSeq" id="WP_000288710.1">
    <property type="nucleotide sequence ID" value="NC_011751.1"/>
</dbReference>
<dbReference type="RefSeq" id="YP_002411901.1">
    <property type="nucleotide sequence ID" value="NC_011751.1"/>
</dbReference>
<dbReference type="SMR" id="B7N3C1"/>
<dbReference type="STRING" id="585056.ECUMN_1148"/>
<dbReference type="GeneID" id="93776456"/>
<dbReference type="KEGG" id="eum:ECUMN_1148"/>
<dbReference type="PATRIC" id="fig|585056.7.peg.1344"/>
<dbReference type="HOGENOM" id="CLU_118972_1_0_6"/>
<dbReference type="Proteomes" id="UP000007097">
    <property type="component" value="Chromosome"/>
</dbReference>
<dbReference type="GO" id="GO:0000917">
    <property type="term" value="P:division septum assembly"/>
    <property type="evidence" value="ECO:0007669"/>
    <property type="project" value="UniProtKB-KW"/>
</dbReference>
<dbReference type="GO" id="GO:0006281">
    <property type="term" value="P:DNA repair"/>
    <property type="evidence" value="ECO:0007669"/>
    <property type="project" value="TreeGrafter"/>
</dbReference>
<dbReference type="GO" id="GO:0051782">
    <property type="term" value="P:negative regulation of cell division"/>
    <property type="evidence" value="ECO:0007669"/>
    <property type="project" value="UniProtKB-UniRule"/>
</dbReference>
<dbReference type="GO" id="GO:0009432">
    <property type="term" value="P:SOS response"/>
    <property type="evidence" value="ECO:0007669"/>
    <property type="project" value="UniProtKB-UniRule"/>
</dbReference>
<dbReference type="FunFam" id="3.40.50.300:FF:000417">
    <property type="entry name" value="Cell division inhibitor SulA"/>
    <property type="match status" value="1"/>
</dbReference>
<dbReference type="Gene3D" id="3.40.50.300">
    <property type="entry name" value="P-loop containing nucleotide triphosphate hydrolases"/>
    <property type="match status" value="1"/>
</dbReference>
<dbReference type="HAMAP" id="MF_01179">
    <property type="entry name" value="SulA"/>
    <property type="match status" value="1"/>
</dbReference>
<dbReference type="InterPro" id="IPR004596">
    <property type="entry name" value="Cell_div_suppressor_SulA"/>
</dbReference>
<dbReference type="InterPro" id="IPR027417">
    <property type="entry name" value="P-loop_NTPase"/>
</dbReference>
<dbReference type="InterPro" id="IPR050356">
    <property type="entry name" value="SulA_CellDiv_inhibitor"/>
</dbReference>
<dbReference type="InterPro" id="IPR047696">
    <property type="entry name" value="SulA_enterobact"/>
</dbReference>
<dbReference type="NCBIfam" id="NF007892">
    <property type="entry name" value="PRK10595.1"/>
    <property type="match status" value="1"/>
</dbReference>
<dbReference type="NCBIfam" id="TIGR00623">
    <property type="entry name" value="SOS_SulA_coli"/>
    <property type="match status" value="1"/>
</dbReference>
<dbReference type="PANTHER" id="PTHR35369">
    <property type="entry name" value="BLR3025 PROTEIN-RELATED"/>
    <property type="match status" value="1"/>
</dbReference>
<dbReference type="PANTHER" id="PTHR35369:SF4">
    <property type="entry name" value="CELL DIVISION INHIBITOR SULA"/>
    <property type="match status" value="1"/>
</dbReference>
<dbReference type="Pfam" id="PF03846">
    <property type="entry name" value="SulA"/>
    <property type="match status" value="1"/>
</dbReference>
<dbReference type="PIRSF" id="PIRSF003093">
    <property type="entry name" value="SulA"/>
    <property type="match status" value="1"/>
</dbReference>
<dbReference type="SUPFAM" id="SSF52540">
    <property type="entry name" value="P-loop containing nucleoside triphosphate hydrolases"/>
    <property type="match status" value="1"/>
</dbReference>
<gene>
    <name evidence="1" type="primary">sulA</name>
    <name type="ordered locus">ECUMN_1148</name>
</gene>
<name>SULA_ECOLU</name>
<reference key="1">
    <citation type="journal article" date="2009" name="PLoS Genet.">
        <title>Organised genome dynamics in the Escherichia coli species results in highly diverse adaptive paths.</title>
        <authorList>
            <person name="Touchon M."/>
            <person name="Hoede C."/>
            <person name="Tenaillon O."/>
            <person name="Barbe V."/>
            <person name="Baeriswyl S."/>
            <person name="Bidet P."/>
            <person name="Bingen E."/>
            <person name="Bonacorsi S."/>
            <person name="Bouchier C."/>
            <person name="Bouvet O."/>
            <person name="Calteau A."/>
            <person name="Chiapello H."/>
            <person name="Clermont O."/>
            <person name="Cruveiller S."/>
            <person name="Danchin A."/>
            <person name="Diard M."/>
            <person name="Dossat C."/>
            <person name="Karoui M.E."/>
            <person name="Frapy E."/>
            <person name="Garry L."/>
            <person name="Ghigo J.M."/>
            <person name="Gilles A.M."/>
            <person name="Johnson J."/>
            <person name="Le Bouguenec C."/>
            <person name="Lescat M."/>
            <person name="Mangenot S."/>
            <person name="Martinez-Jehanne V."/>
            <person name="Matic I."/>
            <person name="Nassif X."/>
            <person name="Oztas S."/>
            <person name="Petit M.A."/>
            <person name="Pichon C."/>
            <person name="Rouy Z."/>
            <person name="Ruf C.S."/>
            <person name="Schneider D."/>
            <person name="Tourret J."/>
            <person name="Vacherie B."/>
            <person name="Vallenet D."/>
            <person name="Medigue C."/>
            <person name="Rocha E.P.C."/>
            <person name="Denamur E."/>
        </authorList>
    </citation>
    <scope>NUCLEOTIDE SEQUENCE [LARGE SCALE GENOMIC DNA]</scope>
    <source>
        <strain>UMN026 / ExPEC</strain>
    </source>
</reference>
<evidence type="ECO:0000255" key="1">
    <source>
        <dbReference type="HAMAP-Rule" id="MF_01179"/>
    </source>
</evidence>